<reference key="1">
    <citation type="submission" date="2000-01" db="EMBL/GenBank/DDBJ databases">
        <title>Cloning of a novel gene expressed differentially in maturing epidermal Langerhans cells.</title>
        <authorList>
            <person name="Luy M.A."/>
            <person name="Reske K."/>
        </authorList>
    </citation>
    <scope>NUCLEOTIDE SEQUENCE [MRNA]</scope>
    <source>
        <strain>BALB/cJ</strain>
    </source>
</reference>
<reference key="2">
    <citation type="journal article" date="2005" name="Science">
        <title>The transcriptional landscape of the mammalian genome.</title>
        <authorList>
            <person name="Carninci P."/>
            <person name="Kasukawa T."/>
            <person name="Katayama S."/>
            <person name="Gough J."/>
            <person name="Frith M.C."/>
            <person name="Maeda N."/>
            <person name="Oyama R."/>
            <person name="Ravasi T."/>
            <person name="Lenhard B."/>
            <person name="Wells C."/>
            <person name="Kodzius R."/>
            <person name="Shimokawa K."/>
            <person name="Bajic V.B."/>
            <person name="Brenner S.E."/>
            <person name="Batalov S."/>
            <person name="Forrest A.R."/>
            <person name="Zavolan M."/>
            <person name="Davis M.J."/>
            <person name="Wilming L.G."/>
            <person name="Aidinis V."/>
            <person name="Allen J.E."/>
            <person name="Ambesi-Impiombato A."/>
            <person name="Apweiler R."/>
            <person name="Aturaliya R.N."/>
            <person name="Bailey T.L."/>
            <person name="Bansal M."/>
            <person name="Baxter L."/>
            <person name="Beisel K.W."/>
            <person name="Bersano T."/>
            <person name="Bono H."/>
            <person name="Chalk A.M."/>
            <person name="Chiu K.P."/>
            <person name="Choudhary V."/>
            <person name="Christoffels A."/>
            <person name="Clutterbuck D.R."/>
            <person name="Crowe M.L."/>
            <person name="Dalla E."/>
            <person name="Dalrymple B.P."/>
            <person name="de Bono B."/>
            <person name="Della Gatta G."/>
            <person name="di Bernardo D."/>
            <person name="Down T."/>
            <person name="Engstrom P."/>
            <person name="Fagiolini M."/>
            <person name="Faulkner G."/>
            <person name="Fletcher C.F."/>
            <person name="Fukushima T."/>
            <person name="Furuno M."/>
            <person name="Futaki S."/>
            <person name="Gariboldi M."/>
            <person name="Georgii-Hemming P."/>
            <person name="Gingeras T.R."/>
            <person name="Gojobori T."/>
            <person name="Green R.E."/>
            <person name="Gustincich S."/>
            <person name="Harbers M."/>
            <person name="Hayashi Y."/>
            <person name="Hensch T.K."/>
            <person name="Hirokawa N."/>
            <person name="Hill D."/>
            <person name="Huminiecki L."/>
            <person name="Iacono M."/>
            <person name="Ikeo K."/>
            <person name="Iwama A."/>
            <person name="Ishikawa T."/>
            <person name="Jakt M."/>
            <person name="Kanapin A."/>
            <person name="Katoh M."/>
            <person name="Kawasawa Y."/>
            <person name="Kelso J."/>
            <person name="Kitamura H."/>
            <person name="Kitano H."/>
            <person name="Kollias G."/>
            <person name="Krishnan S.P."/>
            <person name="Kruger A."/>
            <person name="Kummerfeld S.K."/>
            <person name="Kurochkin I.V."/>
            <person name="Lareau L.F."/>
            <person name="Lazarevic D."/>
            <person name="Lipovich L."/>
            <person name="Liu J."/>
            <person name="Liuni S."/>
            <person name="McWilliam S."/>
            <person name="Madan Babu M."/>
            <person name="Madera M."/>
            <person name="Marchionni L."/>
            <person name="Matsuda H."/>
            <person name="Matsuzawa S."/>
            <person name="Miki H."/>
            <person name="Mignone F."/>
            <person name="Miyake S."/>
            <person name="Morris K."/>
            <person name="Mottagui-Tabar S."/>
            <person name="Mulder N."/>
            <person name="Nakano N."/>
            <person name="Nakauchi H."/>
            <person name="Ng P."/>
            <person name="Nilsson R."/>
            <person name="Nishiguchi S."/>
            <person name="Nishikawa S."/>
            <person name="Nori F."/>
            <person name="Ohara O."/>
            <person name="Okazaki Y."/>
            <person name="Orlando V."/>
            <person name="Pang K.C."/>
            <person name="Pavan W.J."/>
            <person name="Pavesi G."/>
            <person name="Pesole G."/>
            <person name="Petrovsky N."/>
            <person name="Piazza S."/>
            <person name="Reed J."/>
            <person name="Reid J.F."/>
            <person name="Ring B.Z."/>
            <person name="Ringwald M."/>
            <person name="Rost B."/>
            <person name="Ruan Y."/>
            <person name="Salzberg S.L."/>
            <person name="Sandelin A."/>
            <person name="Schneider C."/>
            <person name="Schoenbach C."/>
            <person name="Sekiguchi K."/>
            <person name="Semple C.A."/>
            <person name="Seno S."/>
            <person name="Sessa L."/>
            <person name="Sheng Y."/>
            <person name="Shibata Y."/>
            <person name="Shimada H."/>
            <person name="Shimada K."/>
            <person name="Silva D."/>
            <person name="Sinclair B."/>
            <person name="Sperling S."/>
            <person name="Stupka E."/>
            <person name="Sugiura K."/>
            <person name="Sultana R."/>
            <person name="Takenaka Y."/>
            <person name="Taki K."/>
            <person name="Tammoja K."/>
            <person name="Tan S.L."/>
            <person name="Tang S."/>
            <person name="Taylor M.S."/>
            <person name="Tegner J."/>
            <person name="Teichmann S.A."/>
            <person name="Ueda H.R."/>
            <person name="van Nimwegen E."/>
            <person name="Verardo R."/>
            <person name="Wei C.L."/>
            <person name="Yagi K."/>
            <person name="Yamanishi H."/>
            <person name="Zabarovsky E."/>
            <person name="Zhu S."/>
            <person name="Zimmer A."/>
            <person name="Hide W."/>
            <person name="Bult C."/>
            <person name="Grimmond S.M."/>
            <person name="Teasdale R.D."/>
            <person name="Liu E.T."/>
            <person name="Brusic V."/>
            <person name="Quackenbush J."/>
            <person name="Wahlestedt C."/>
            <person name="Mattick J.S."/>
            <person name="Hume D.A."/>
            <person name="Kai C."/>
            <person name="Sasaki D."/>
            <person name="Tomaru Y."/>
            <person name="Fukuda S."/>
            <person name="Kanamori-Katayama M."/>
            <person name="Suzuki M."/>
            <person name="Aoki J."/>
            <person name="Arakawa T."/>
            <person name="Iida J."/>
            <person name="Imamura K."/>
            <person name="Itoh M."/>
            <person name="Kato T."/>
            <person name="Kawaji H."/>
            <person name="Kawagashira N."/>
            <person name="Kawashima T."/>
            <person name="Kojima M."/>
            <person name="Kondo S."/>
            <person name="Konno H."/>
            <person name="Nakano K."/>
            <person name="Ninomiya N."/>
            <person name="Nishio T."/>
            <person name="Okada M."/>
            <person name="Plessy C."/>
            <person name="Shibata K."/>
            <person name="Shiraki T."/>
            <person name="Suzuki S."/>
            <person name="Tagami M."/>
            <person name="Waki K."/>
            <person name="Watahiki A."/>
            <person name="Okamura-Oho Y."/>
            <person name="Suzuki H."/>
            <person name="Kawai J."/>
            <person name="Hayashizaki Y."/>
        </authorList>
    </citation>
    <scope>NUCLEOTIDE SEQUENCE [LARGE SCALE MRNA]</scope>
    <source>
        <strain>C57BL/6J</strain>
        <strain>NOD</strain>
        <tissue>Heart</tissue>
        <tissue>Thymus</tissue>
    </source>
</reference>
<reference key="3">
    <citation type="journal article" date="2004" name="Genome Res.">
        <title>The status, quality, and expansion of the NIH full-length cDNA project: the Mammalian Gene Collection (MGC).</title>
        <authorList>
            <consortium name="The MGC Project Team"/>
        </authorList>
    </citation>
    <scope>NUCLEOTIDE SEQUENCE [LARGE SCALE MRNA]</scope>
    <source>
        <tissue>Trophoblast</tissue>
    </source>
</reference>
<reference key="4">
    <citation type="journal article" date="2007" name="Proc. Natl. Acad. Sci. U.S.A.">
        <title>Large-scale phosphorylation analysis of mouse liver.</title>
        <authorList>
            <person name="Villen J."/>
            <person name="Beausoleil S.A."/>
            <person name="Gerber S.A."/>
            <person name="Gygi S.P."/>
        </authorList>
    </citation>
    <scope>IDENTIFICATION BY MASS SPECTROMETRY [LARGE SCALE ANALYSIS]</scope>
    <source>
        <tissue>Liver</tissue>
    </source>
</reference>
<reference key="5">
    <citation type="journal article" date="2009" name="Immunity">
        <title>The phagosomal proteome in interferon-gamma-activated macrophages.</title>
        <authorList>
            <person name="Trost M."/>
            <person name="English L."/>
            <person name="Lemieux S."/>
            <person name="Courcelles M."/>
            <person name="Desjardins M."/>
            <person name="Thibault P."/>
        </authorList>
    </citation>
    <scope>PHOSPHORYLATION [LARGE SCALE ANALYSIS] AT SER-178 AND SER-182</scope>
    <scope>IDENTIFICATION BY MASS SPECTROMETRY [LARGE SCALE ANALYSIS]</scope>
</reference>
<reference key="6">
    <citation type="journal article" date="2010" name="Cell">
        <title>A tissue-specific atlas of mouse protein phosphorylation and expression.</title>
        <authorList>
            <person name="Huttlin E.L."/>
            <person name="Jedrychowski M.P."/>
            <person name="Elias J.E."/>
            <person name="Goswami T."/>
            <person name="Rad R."/>
            <person name="Beausoleil S.A."/>
            <person name="Villen J."/>
            <person name="Haas W."/>
            <person name="Sowa M.E."/>
            <person name="Gygi S.P."/>
        </authorList>
    </citation>
    <scope>PHOSPHORYLATION [LARGE SCALE ANALYSIS] AT THR-176; SER-178 AND SER-182</scope>
    <scope>IDENTIFICATION BY MASS SPECTROMETRY [LARGE SCALE ANALYSIS]</scope>
    <source>
        <tissue>Brain</tissue>
        <tissue>Kidney</tissue>
        <tissue>Lung</tissue>
        <tissue>Spleen</tissue>
        <tissue>Testis</tissue>
    </source>
</reference>
<reference key="7">
    <citation type="journal article" date="2014" name="Mol. Cell. Proteomics">
        <title>Immunoaffinity enrichment and mass spectrometry analysis of protein methylation.</title>
        <authorList>
            <person name="Guo A."/>
            <person name="Gu H."/>
            <person name="Zhou J."/>
            <person name="Mulhern D."/>
            <person name="Wang Y."/>
            <person name="Lee K.A."/>
            <person name="Yang V."/>
            <person name="Aguiar M."/>
            <person name="Kornhauser J."/>
            <person name="Jia X."/>
            <person name="Ren J."/>
            <person name="Beausoleil S.A."/>
            <person name="Silva J.C."/>
            <person name="Vemulapalli V."/>
            <person name="Bedford M.T."/>
            <person name="Comb M.J."/>
        </authorList>
    </citation>
    <scope>METHYLATION [LARGE SCALE ANALYSIS] AT ARG-479</scope>
    <scope>IDENTIFICATION BY MASS SPECTROMETRY [LARGE SCALE ANALYSIS]</scope>
    <source>
        <tissue>Brain</tissue>
        <tissue>Embryo</tissue>
    </source>
</reference>
<reference key="8">
    <citation type="journal article" date="2019" name="J. Cell Sci.">
        <title>Tox4 modulates cell fate reprogramming.</title>
        <authorList>
            <person name="Vanheer L."/>
            <person name="Song J."/>
            <person name="De Geest N."/>
            <person name="Janiszewski A."/>
            <person name="Talon I."/>
            <person name="Provenzano C."/>
            <person name="Oh T."/>
            <person name="Chappell J."/>
            <person name="Pasque V."/>
        </authorList>
    </citation>
    <scope>FUNCTION</scope>
</reference>
<reference key="9">
    <citation type="journal article" date="2022" name="Cell Metab.">
        <title>TOX4, an insulin receptor-independent regulator of hepatic glucose production, is activated in diabetic liver.</title>
        <authorList>
            <person name="Wang L."/>
            <person name="Yu J."/>
            <person name="Zhou Q."/>
            <person name="Wang X."/>
            <person name="Mukhanova M."/>
            <person name="Du W."/>
            <person name="Sun L."/>
            <person name="Pajvani U.B."/>
            <person name="Accili D."/>
        </authorList>
    </citation>
    <scope>FUNCTION</scope>
    <scope>INDUCTION BY HFD</scope>
    <scope>INTERACTION WITH FOXO1 AND CREB1</scope>
    <scope>ACTIVITY REGULATION</scope>
    <scope>SUBCELLULAR LOCATION</scope>
    <scope>DISRUPTION PHENOTYPE</scope>
    <scope>DNA-BINDING</scope>
    <scope>MUTAGENESIS OF 213-LYS--LYS-218</scope>
</reference>
<reference key="10">
    <citation type="journal article" date="2022" name="Commun. Biol.">
        <title>TOX4 facilitates promoter-proximal pausing and C-terminal domain dephosphorylation of RNA polymerase II in human cells.</title>
        <authorList>
            <person name="Liu Z."/>
            <person name="Wu A."/>
            <person name="Wu Z."/>
            <person name="Wang T."/>
            <person name="Pan Y."/>
            <person name="Li B."/>
            <person name="Zhang X."/>
            <person name="Yu M."/>
        </authorList>
    </citation>
    <scope>FUNCTION</scope>
    <scope>SUBCELLULAR LOCATION</scope>
    <scope>INTERACTION WITH PPP1CA</scope>
</reference>
<reference key="11">
    <citation type="journal article" date="2023" name="Commun. Biol.">
        <title>Tox4 regulates transcriptional elongation and reinitiation during murine T cell development.</title>
        <authorList>
            <person name="Wang T."/>
            <person name="Zhao R."/>
            <person name="Zhi J."/>
            <person name="Liu Z."/>
            <person name="Wu A."/>
            <person name="Yang Z."/>
            <person name="Wang W."/>
            <person name="Ni T."/>
            <person name="Jing L."/>
            <person name="Yu M."/>
        </authorList>
    </citation>
    <scope>DISRUPTION PHENOTYPE</scope>
</reference>
<sequence>MEFPGGNDNYLTITGPSHPFLSGAETFHTPSLGDEEFEIPPISLDSDPSLAVSDVVGHFDDLADPSSSQDGSFSAQYGVQTLDMPVGMTHGLMEQGGGLLSGGLTMDLDHSIGTQYSANPPVTIDVPMTDMTSGLMGHSQLTTIDQSELSSQLGLSLGGGTILPPAQSPEDRLSTTPSPTNSLHEDGVDDFRRQLPAQKTVVVETGKKQKAPKKRKKKDPNEPQKPVSAYALFFRDTQAAIKGQNPNATFGEVSKIVASMWDSLGEEQKQVYKRKTEAAKKEYLKALAAYKDNQECQATVETVELDPVPQSQTPSPPPVTAADPASPAPASTESPALPPCIIVNSTLSSYVANQASSGPGGQPNITKLIITKQMLPSSITMSQGGMVTVIPATVVTSRGLQVGQTSTATIQPSQQAQIVTRSVLQAAAAAAASMQLPPPRLQPPPLQQMPQPPTQQQVTILQQPPPLQAMQQPPPQKVRINLQQQPPPLQSKIVPPPTLKIQTTVVPPTVESSPEQPMNSSPEAHTVEATSPETICEMIADVVPEVESPSQMDVELVSGSPVALSPQPRCVRSGCENPPVVSKDWDNEYCSNECVVKHCRDVFLAWVASRNPNSVVFVK</sequence>
<evidence type="ECO:0000250" key="1">
    <source>
        <dbReference type="UniProtKB" id="O94842"/>
    </source>
</evidence>
<evidence type="ECO:0000255" key="2"/>
<evidence type="ECO:0000255" key="3">
    <source>
        <dbReference type="PROSITE-ProRule" id="PRU00267"/>
    </source>
</evidence>
<evidence type="ECO:0000256" key="4">
    <source>
        <dbReference type="SAM" id="MobiDB-lite"/>
    </source>
</evidence>
<evidence type="ECO:0000269" key="5">
    <source>
    </source>
</evidence>
<evidence type="ECO:0000269" key="6">
    <source>
    </source>
</evidence>
<evidence type="ECO:0000269" key="7">
    <source>
    </source>
</evidence>
<evidence type="ECO:0000269" key="8">
    <source>
    </source>
</evidence>
<evidence type="ECO:0000303" key="9">
    <source>
    </source>
</evidence>
<evidence type="ECO:0000303" key="10">
    <source ref="1"/>
</evidence>
<evidence type="ECO:0000305" key="11"/>
<evidence type="ECO:0000312" key="12">
    <source>
        <dbReference type="MGI" id="MGI:1915389"/>
    </source>
</evidence>
<evidence type="ECO:0007744" key="13">
    <source>
    </source>
</evidence>
<evidence type="ECO:0007744" key="14">
    <source>
    </source>
</evidence>
<evidence type="ECO:0007744" key="15">
    <source>
    </source>
</evidence>
<keyword id="KW-0158">Chromosome</keyword>
<keyword id="KW-0238">DNA-binding</keyword>
<keyword id="KW-0488">Methylation</keyword>
<keyword id="KW-0539">Nucleus</keyword>
<keyword id="KW-0597">Phosphoprotein</keyword>
<keyword id="KW-1185">Reference proteome</keyword>
<keyword id="KW-0804">Transcription</keyword>
<keyword id="KW-0805">Transcription regulation</keyword>
<organism>
    <name type="scientific">Mus musculus</name>
    <name type="common">Mouse</name>
    <dbReference type="NCBI Taxonomy" id="10090"/>
    <lineage>
        <taxon>Eukaryota</taxon>
        <taxon>Metazoa</taxon>
        <taxon>Chordata</taxon>
        <taxon>Craniata</taxon>
        <taxon>Vertebrata</taxon>
        <taxon>Euteleostomi</taxon>
        <taxon>Mammalia</taxon>
        <taxon>Eutheria</taxon>
        <taxon>Euarchontoglires</taxon>
        <taxon>Glires</taxon>
        <taxon>Rodentia</taxon>
        <taxon>Myomorpha</taxon>
        <taxon>Muroidea</taxon>
        <taxon>Muridae</taxon>
        <taxon>Murinae</taxon>
        <taxon>Mus</taxon>
        <taxon>Mus</taxon>
    </lineage>
</organism>
<name>TOX4_MOUSE</name>
<feature type="chain" id="PRO_0000048569" description="TOX high mobility group box family member 4">
    <location>
        <begin position="1"/>
        <end position="619"/>
    </location>
</feature>
<feature type="DNA-binding region" description="HMG box" evidence="3">
    <location>
        <begin position="223"/>
        <end position="291"/>
    </location>
</feature>
<feature type="region of interest" description="Disordered" evidence="4">
    <location>
        <begin position="155"/>
        <end position="227"/>
    </location>
</feature>
<feature type="region of interest" description="Disordered" evidence="4">
    <location>
        <begin position="306"/>
        <end position="335"/>
    </location>
</feature>
<feature type="short sequence motif" description="Nuclear localization signal" evidence="2 6">
    <location>
        <begin position="213"/>
        <end position="218"/>
    </location>
</feature>
<feature type="compositionally biased region" description="Basic and acidic residues" evidence="4">
    <location>
        <begin position="183"/>
        <end position="193"/>
    </location>
</feature>
<feature type="compositionally biased region" description="Basic residues" evidence="4">
    <location>
        <begin position="208"/>
        <end position="218"/>
    </location>
</feature>
<feature type="compositionally biased region" description="Low complexity" evidence="4">
    <location>
        <begin position="320"/>
        <end position="335"/>
    </location>
</feature>
<feature type="modified residue" description="Phosphothreonine" evidence="14">
    <location>
        <position position="176"/>
    </location>
</feature>
<feature type="modified residue" description="Phosphoserine" evidence="13 14">
    <location>
        <position position="178"/>
    </location>
</feature>
<feature type="modified residue" description="Phosphoserine" evidence="13 14">
    <location>
        <position position="182"/>
    </location>
</feature>
<feature type="modified residue" description="Phosphothreonine" evidence="1">
    <location>
        <position position="313"/>
    </location>
</feature>
<feature type="modified residue" description="Phosphoserine" evidence="1">
    <location>
        <position position="315"/>
    </location>
</feature>
<feature type="modified residue" description="Asymmetric dimethylarginine" evidence="15">
    <location>
        <position position="479"/>
    </location>
</feature>
<feature type="modified residue" description="Phosphoserine" evidence="1">
    <location>
        <position position="531"/>
    </location>
</feature>
<feature type="modified residue" description="Phosphoserine" evidence="1">
    <location>
        <position position="548"/>
    </location>
</feature>
<feature type="modified residue" description="Phosphoserine" evidence="1">
    <location>
        <position position="550"/>
    </location>
</feature>
<feature type="modified residue" description="Phosphoserine" evidence="1">
    <location>
        <position position="558"/>
    </location>
</feature>
<feature type="modified residue" description="Phosphoserine" evidence="1">
    <location>
        <position position="560"/>
    </location>
</feature>
<feature type="modified residue" description="Phosphoserine" evidence="1">
    <location>
        <position position="565"/>
    </location>
</feature>
<feature type="mutagenesis site" description="Loss of transcriptional regulation of gluconeogenic genes expression." evidence="6">
    <location>
        <begin position="213"/>
        <end position="218"/>
    </location>
</feature>
<feature type="sequence conflict" description="In Ref. 1; AAK00713." evidence="11" ref="1">
    <original>F</original>
    <variation>S</variation>
    <location>
        <position position="3"/>
    </location>
</feature>
<feature type="sequence conflict" description="In Ref. 2; BAC40170." evidence="11" ref="2">
    <original>G</original>
    <variation>R</variation>
    <location>
        <position position="243"/>
    </location>
</feature>
<feature type="sequence conflict" description="In Ref. 1; AAK00713, 2; BAC40170 and 3; AAH50091." evidence="11" ref="1 2 3">
    <original>A</original>
    <variation>T</variation>
    <location>
        <position position="321"/>
    </location>
</feature>
<feature type="sequence conflict" description="In Ref. 3; AAH50091." evidence="11" ref="3">
    <original>I</original>
    <variation>T</variation>
    <location>
        <position position="365"/>
    </location>
</feature>
<feature type="sequence conflict" description="In Ref. 3; AAH50091." evidence="11" ref="3">
    <original>Q</original>
    <variation>R</variation>
    <location>
        <position position="425"/>
    </location>
</feature>
<feature type="sequence conflict" description="In Ref. 1; AAK00713." evidence="11" ref="1">
    <original>L</original>
    <variation>S</variation>
    <location>
        <position position="446"/>
    </location>
</feature>
<feature type="sequence conflict" description="In Ref. 2; BAB31949." evidence="11" ref="2">
    <original>P</original>
    <variation>T</variation>
    <location>
        <position position="453"/>
    </location>
</feature>
<gene>
    <name evidence="9 12" type="primary">Tox4</name>
</gene>
<protein>
    <recommendedName>
        <fullName>TOX high mobility group box family member 4</fullName>
    </recommendedName>
    <alternativeName>
        <fullName evidence="10">Epidermal Langerhans cell protein LCP1</fullName>
    </alternativeName>
</protein>
<comment type="function">
    <text evidence="1 5 6 7">Transcription factor that modulates cell fate reprogramming from the somatic state to the pluripotent and neuronal fate (PubMed:31519808). In liver, controls the expression of hormone-regulated gluconeogenic genes such as G6PC1 and PCK1 (PubMed:34914893). This regulation is independent of the insulin receptor activation (PubMed:34914893). Also acts as a regulatory component of protein phosphatase 1 (PP1) complexes (PubMed:35365735). Component of the PNUTS-PP1 protein phosphatase complex, a PP1 complex that regulates RNA polymerase II transcription pause-release (PubMed:35365735). PNUTS-PP1 also plays a role in the control of chromatin structure and cell cycle progression during the transition from mitosis into interphase (By similarity).</text>
</comment>
<comment type="activity regulation">
    <text evidence="6">In liver, recruited to target gene promoters following treatment with dexamethasone and cAMP. Binding is decreased in presence of insulin.</text>
</comment>
<comment type="subunit">
    <text evidence="1 6 7">Component of the PNUTS-PP1 phosphatase complex, composed of PPP1R10/PNUTS, TOX4, WDR82 and PPP1CA or PPP1CB or PPP1CC. Interacts with PPP1R10/PNUTS (PubMed:35365735). Interacts with FOXO1 and CREB1 (increased by cAMP); FOXO1 and CREB1 are required for full induction of TOX4-dependent activity and the interactions are inhibited by insulin (PubMed:34914893).</text>
</comment>
<comment type="subcellular location">
    <subcellularLocation>
        <location evidence="6">Nucleus</location>
    </subcellularLocation>
    <subcellularLocation>
        <location evidence="6 7">Chromosome</location>
    </subcellularLocation>
    <text evidence="6 7">Associated with chromatin; colocalizes with RNA polymerase II (Pol II) on chromatin.</text>
</comment>
<comment type="induction">
    <text evidence="6">In liver, expression is increased upon high fat diet.</text>
</comment>
<comment type="disruption phenotype">
    <text evidence="6 8">Conditional knockout in liver lead to no 10% reduction of glucose levels after 4 hours of fasting with an improvement of glucose tolerance and an increased insulin sensitivity (PubMed:34914893). Conditional deletion in T-cells leads to impaired T-cell development in the thymus, due to impaired activation and proliferation of CD8 cells (PubMed:37286708).</text>
</comment>
<comment type="caution">
    <text evidence="1 7 11">The role of TOX4 in RNA polymerase II transcription pause-release is unclear. According to a report, WDR82 promotes transcription pause-release by mediating dephosphorylation of POLR2A at 'Ser-5' of the repetitive C-terminal domain (CTD), thereby preventing transcription elongation (PubMed:35365735). According to another report, WDR82 promotes transcription pause-release as part of the PNUTS-PP1 protein phosphatase complex, a PP1 complex that mediates dephosphorylation of proteins involved in transcription, such as AFF4, CDK9, MEPCE, INTS12, NCBP1, POLR2M/GDOWN1 and SUPT6H (By similarity).</text>
</comment>
<dbReference type="EMBL" id="AF228408">
    <property type="protein sequence ID" value="AAK00713.1"/>
    <property type="molecule type" value="mRNA"/>
</dbReference>
<dbReference type="EMBL" id="AK019980">
    <property type="protein sequence ID" value="BAB31949.1"/>
    <property type="molecule type" value="mRNA"/>
</dbReference>
<dbReference type="EMBL" id="AK088144">
    <property type="protein sequence ID" value="BAC40170.1"/>
    <property type="molecule type" value="mRNA"/>
</dbReference>
<dbReference type="EMBL" id="AK147023">
    <property type="protein sequence ID" value="BAE27616.1"/>
    <property type="molecule type" value="mRNA"/>
</dbReference>
<dbReference type="EMBL" id="AK147834">
    <property type="protein sequence ID" value="BAE28170.1"/>
    <property type="molecule type" value="mRNA"/>
</dbReference>
<dbReference type="EMBL" id="BC050091">
    <property type="protein sequence ID" value="AAH50091.1"/>
    <property type="molecule type" value="mRNA"/>
</dbReference>
<dbReference type="CCDS" id="CCDS36920.1"/>
<dbReference type="RefSeq" id="NP_075923.2">
    <property type="nucleotide sequence ID" value="NM_023434.3"/>
</dbReference>
<dbReference type="SMR" id="Q8BU11"/>
<dbReference type="BioGRID" id="234546">
    <property type="interactions" value="13"/>
</dbReference>
<dbReference type="FunCoup" id="Q8BU11">
    <property type="interactions" value="3577"/>
</dbReference>
<dbReference type="IntAct" id="Q8BU11">
    <property type="interactions" value="15"/>
</dbReference>
<dbReference type="MINT" id="Q8BU11"/>
<dbReference type="STRING" id="10090.ENSMUSP00000022766"/>
<dbReference type="GlyGen" id="Q8BU11">
    <property type="glycosylation" value="2 sites, 1 O-linked glycan (2 sites)"/>
</dbReference>
<dbReference type="iPTMnet" id="Q8BU11"/>
<dbReference type="PhosphoSitePlus" id="Q8BU11"/>
<dbReference type="jPOST" id="Q8BU11"/>
<dbReference type="PaxDb" id="10090-ENSMUSP00000022766"/>
<dbReference type="ProteomicsDB" id="258816"/>
<dbReference type="Pumba" id="Q8BU11"/>
<dbReference type="Antibodypedia" id="7517">
    <property type="antibodies" value="126 antibodies from 17 providers"/>
</dbReference>
<dbReference type="DNASU" id="268741"/>
<dbReference type="Ensembl" id="ENSMUST00000022766.8">
    <property type="protein sequence ID" value="ENSMUSP00000022766.7"/>
    <property type="gene ID" value="ENSMUSG00000016831.13"/>
</dbReference>
<dbReference type="GeneID" id="268741"/>
<dbReference type="KEGG" id="mmu:268741"/>
<dbReference type="UCSC" id="uc007tpa.2">
    <property type="organism name" value="mouse"/>
</dbReference>
<dbReference type="AGR" id="MGI:1915389"/>
<dbReference type="CTD" id="9878"/>
<dbReference type="MGI" id="MGI:1915389">
    <property type="gene designation" value="Tox4"/>
</dbReference>
<dbReference type="VEuPathDB" id="HostDB:ENSMUSG00000016831"/>
<dbReference type="eggNOG" id="KOG0381">
    <property type="taxonomic scope" value="Eukaryota"/>
</dbReference>
<dbReference type="GeneTree" id="ENSGT00940000154888"/>
<dbReference type="HOGENOM" id="CLU_030650_0_0_1"/>
<dbReference type="InParanoid" id="Q8BU11"/>
<dbReference type="OMA" id="FLSGAEX"/>
<dbReference type="OrthoDB" id="10027956at2759"/>
<dbReference type="PhylomeDB" id="Q8BU11"/>
<dbReference type="TreeFam" id="TF106481"/>
<dbReference type="BioGRID-ORCS" id="268741">
    <property type="hits" value="8 hits in 78 CRISPR screens"/>
</dbReference>
<dbReference type="ChiTaRS" id="Tox4">
    <property type="organism name" value="mouse"/>
</dbReference>
<dbReference type="PRO" id="PR:Q8BU11"/>
<dbReference type="Proteomes" id="UP000000589">
    <property type="component" value="Chromosome 14"/>
</dbReference>
<dbReference type="RNAct" id="Q8BU11">
    <property type="molecule type" value="protein"/>
</dbReference>
<dbReference type="Bgee" id="ENSMUSG00000016831">
    <property type="expression patterns" value="Expressed in spermatocyte and 276 other cell types or tissues"/>
</dbReference>
<dbReference type="GO" id="GO:0000785">
    <property type="term" value="C:chromatin"/>
    <property type="evidence" value="ECO:0000314"/>
    <property type="project" value="UniProtKB"/>
</dbReference>
<dbReference type="GO" id="GO:0000781">
    <property type="term" value="C:chromosome, telomeric region"/>
    <property type="evidence" value="ECO:0007669"/>
    <property type="project" value="Ensembl"/>
</dbReference>
<dbReference type="GO" id="GO:0005634">
    <property type="term" value="C:nucleus"/>
    <property type="evidence" value="ECO:0007669"/>
    <property type="project" value="UniProtKB-SubCell"/>
</dbReference>
<dbReference type="GO" id="GO:0072357">
    <property type="term" value="C:PTW/PP1 phosphatase complex"/>
    <property type="evidence" value="ECO:0000250"/>
    <property type="project" value="UniProtKB"/>
</dbReference>
<dbReference type="GO" id="GO:0003677">
    <property type="term" value="F:DNA binding"/>
    <property type="evidence" value="ECO:0007669"/>
    <property type="project" value="UniProtKB-KW"/>
</dbReference>
<dbReference type="GO" id="GO:0032968">
    <property type="term" value="P:positive regulation of transcription elongation by RNA polymerase II"/>
    <property type="evidence" value="ECO:0000250"/>
    <property type="project" value="UniProtKB"/>
</dbReference>
<dbReference type="GO" id="GO:0034243">
    <property type="term" value="P:regulation of transcription elongation by RNA polymerase II"/>
    <property type="evidence" value="ECO:0000314"/>
    <property type="project" value="UniProtKB"/>
</dbReference>
<dbReference type="GO" id="GO:0001111">
    <property type="term" value="P:RNA polymerase II promoter clearance"/>
    <property type="evidence" value="ECO:0000250"/>
    <property type="project" value="UniProtKB"/>
</dbReference>
<dbReference type="CDD" id="cd21995">
    <property type="entry name" value="HMG-box_TOX-like"/>
    <property type="match status" value="1"/>
</dbReference>
<dbReference type="FunFam" id="1.10.30.10:FF:000005">
    <property type="entry name" value="TOX high mobility group box family member 3"/>
    <property type="match status" value="1"/>
</dbReference>
<dbReference type="Gene3D" id="1.10.30.10">
    <property type="entry name" value="High mobility group box domain"/>
    <property type="match status" value="1"/>
</dbReference>
<dbReference type="InterPro" id="IPR009071">
    <property type="entry name" value="HMG_box_dom"/>
</dbReference>
<dbReference type="InterPro" id="IPR036910">
    <property type="entry name" value="HMG_box_dom_sf"/>
</dbReference>
<dbReference type="InterPro" id="IPR051365">
    <property type="entry name" value="TOX_HMG-box_domain"/>
</dbReference>
<dbReference type="PANTHER" id="PTHR45781">
    <property type="entry name" value="AGAP000281-PA"/>
    <property type="match status" value="1"/>
</dbReference>
<dbReference type="PANTHER" id="PTHR45781:SF2">
    <property type="entry name" value="TOX HIGH MOBILITY GROUP BOX FAMILY MEMBER 4"/>
    <property type="match status" value="1"/>
</dbReference>
<dbReference type="Pfam" id="PF00505">
    <property type="entry name" value="HMG_box"/>
    <property type="match status" value="1"/>
</dbReference>
<dbReference type="PRINTS" id="PR00886">
    <property type="entry name" value="HIGHMOBLTY12"/>
</dbReference>
<dbReference type="SMART" id="SM00398">
    <property type="entry name" value="HMG"/>
    <property type="match status" value="1"/>
</dbReference>
<dbReference type="SUPFAM" id="SSF47095">
    <property type="entry name" value="HMG-box"/>
    <property type="match status" value="1"/>
</dbReference>
<dbReference type="PROSITE" id="PS50118">
    <property type="entry name" value="HMG_BOX_2"/>
    <property type="match status" value="1"/>
</dbReference>
<proteinExistence type="evidence at protein level"/>
<accession>Q8BU11</accession>
<accession>Q3UGN7</accession>
<accession>Q80UI2</accession>
<accession>Q99PN9</accession>
<accession>Q9CS16</accession>